<comment type="catalytic activity">
    <reaction>
        <text>L-seryl-[protein] + ATP = O-phospho-L-seryl-[protein] + ADP + H(+)</text>
        <dbReference type="Rhea" id="RHEA:17989"/>
        <dbReference type="Rhea" id="RHEA-COMP:9863"/>
        <dbReference type="Rhea" id="RHEA-COMP:11604"/>
        <dbReference type="ChEBI" id="CHEBI:15378"/>
        <dbReference type="ChEBI" id="CHEBI:29999"/>
        <dbReference type="ChEBI" id="CHEBI:30616"/>
        <dbReference type="ChEBI" id="CHEBI:83421"/>
        <dbReference type="ChEBI" id="CHEBI:456216"/>
        <dbReference type="EC" id="2.7.11.1"/>
    </reaction>
</comment>
<comment type="catalytic activity">
    <reaction>
        <text>L-threonyl-[protein] + ATP = O-phospho-L-threonyl-[protein] + ADP + H(+)</text>
        <dbReference type="Rhea" id="RHEA:46608"/>
        <dbReference type="Rhea" id="RHEA-COMP:11060"/>
        <dbReference type="Rhea" id="RHEA-COMP:11605"/>
        <dbReference type="ChEBI" id="CHEBI:15378"/>
        <dbReference type="ChEBI" id="CHEBI:30013"/>
        <dbReference type="ChEBI" id="CHEBI:30616"/>
        <dbReference type="ChEBI" id="CHEBI:61977"/>
        <dbReference type="ChEBI" id="CHEBI:456216"/>
        <dbReference type="EC" id="2.7.11.1"/>
    </reaction>
</comment>
<comment type="similarity">
    <text evidence="4">Belongs to the protein kinase superfamily. CAMK Ser/Thr protein kinase family. NPR/HAL subfamily. HAL5 sub-subfamily.</text>
</comment>
<keyword id="KW-0067">ATP-binding</keyword>
<keyword id="KW-0418">Kinase</keyword>
<keyword id="KW-0547">Nucleotide-binding</keyword>
<keyword id="KW-1185">Reference proteome</keyword>
<keyword id="KW-0723">Serine/threonine-protein kinase</keyword>
<keyword id="KW-0808">Transferase</keyword>
<evidence type="ECO:0000255" key="1">
    <source>
        <dbReference type="PROSITE-ProRule" id="PRU00159"/>
    </source>
</evidence>
<evidence type="ECO:0000255" key="2">
    <source>
        <dbReference type="PROSITE-ProRule" id="PRU10027"/>
    </source>
</evidence>
<evidence type="ECO:0000256" key="3">
    <source>
        <dbReference type="SAM" id="MobiDB-lite"/>
    </source>
</evidence>
<evidence type="ECO:0000305" key="4"/>
<proteinExistence type="inferred from homology"/>
<accession>Q6CXN5</accession>
<reference key="1">
    <citation type="journal article" date="2004" name="Nature">
        <title>Genome evolution in yeasts.</title>
        <authorList>
            <person name="Dujon B."/>
            <person name="Sherman D."/>
            <person name="Fischer G."/>
            <person name="Durrens P."/>
            <person name="Casaregola S."/>
            <person name="Lafontaine I."/>
            <person name="de Montigny J."/>
            <person name="Marck C."/>
            <person name="Neuveglise C."/>
            <person name="Talla E."/>
            <person name="Goffard N."/>
            <person name="Frangeul L."/>
            <person name="Aigle M."/>
            <person name="Anthouard V."/>
            <person name="Babour A."/>
            <person name="Barbe V."/>
            <person name="Barnay S."/>
            <person name="Blanchin S."/>
            <person name="Beckerich J.-M."/>
            <person name="Beyne E."/>
            <person name="Bleykasten C."/>
            <person name="Boisrame A."/>
            <person name="Boyer J."/>
            <person name="Cattolico L."/>
            <person name="Confanioleri F."/>
            <person name="de Daruvar A."/>
            <person name="Despons L."/>
            <person name="Fabre E."/>
            <person name="Fairhead C."/>
            <person name="Ferry-Dumazet H."/>
            <person name="Groppi A."/>
            <person name="Hantraye F."/>
            <person name="Hennequin C."/>
            <person name="Jauniaux N."/>
            <person name="Joyet P."/>
            <person name="Kachouri R."/>
            <person name="Kerrest A."/>
            <person name="Koszul R."/>
            <person name="Lemaire M."/>
            <person name="Lesur I."/>
            <person name="Ma L."/>
            <person name="Muller H."/>
            <person name="Nicaud J.-M."/>
            <person name="Nikolski M."/>
            <person name="Oztas S."/>
            <person name="Ozier-Kalogeropoulos O."/>
            <person name="Pellenz S."/>
            <person name="Potier S."/>
            <person name="Richard G.-F."/>
            <person name="Straub M.-L."/>
            <person name="Suleau A."/>
            <person name="Swennen D."/>
            <person name="Tekaia F."/>
            <person name="Wesolowski-Louvel M."/>
            <person name="Westhof E."/>
            <person name="Wirth B."/>
            <person name="Zeniou-Meyer M."/>
            <person name="Zivanovic Y."/>
            <person name="Bolotin-Fukuhara M."/>
            <person name="Thierry A."/>
            <person name="Bouchier C."/>
            <person name="Caudron B."/>
            <person name="Scarpelli C."/>
            <person name="Gaillardin C."/>
            <person name="Weissenbach J."/>
            <person name="Wincker P."/>
            <person name="Souciet J.-L."/>
        </authorList>
    </citation>
    <scope>NUCLEOTIDE SEQUENCE [LARGE SCALE GENOMIC DNA]</scope>
    <source>
        <strain>ATCC 8585 / CBS 2359 / DSM 70799 / NBRC 1267 / NRRL Y-1140 / WM37</strain>
    </source>
</reference>
<organism>
    <name type="scientific">Kluyveromyces lactis (strain ATCC 8585 / CBS 2359 / DSM 70799 / NBRC 1267 / NRRL Y-1140 / WM37)</name>
    <name type="common">Yeast</name>
    <name type="synonym">Candida sphaerica</name>
    <dbReference type="NCBI Taxonomy" id="284590"/>
    <lineage>
        <taxon>Eukaryota</taxon>
        <taxon>Fungi</taxon>
        <taxon>Dikarya</taxon>
        <taxon>Ascomycota</taxon>
        <taxon>Saccharomycotina</taxon>
        <taxon>Saccharomycetes</taxon>
        <taxon>Saccharomycetales</taxon>
        <taxon>Saccharomycetaceae</taxon>
        <taxon>Kluyveromyces</taxon>
    </lineage>
</organism>
<protein>
    <recommendedName>
        <fullName>Probable serine/threonine-protein kinase HAL5-like</fullName>
        <ecNumber>2.7.11.1</ecNumber>
    </recommendedName>
</protein>
<sequence length="772" mass="85538">MASSNVDSSEPRISRESSLKRSLSISKSLKGLFKSGGGNANTGPTTAAAAAAPSSISTPEVPTLATKDKQDRLKNLAANKEKELQTSRRGVASPSLSPTRHVSLSNLAKLSLTSRAGTGQVDPNVIHETSPLASDEESTDLAFGKRQSSSNRSSSFSNEEQEPNNKYPLLEKLMGDLDEMVCGSIDTQLSKSPDTVEASSLRRSRSTQRKRLNSFSLRPRALSNPGQNPNHPVENRERSNTSSIDLLMSHESESRAIYKSDQFSVYPDGHHAHHLKVVPIVHDLEQSLNKPKSSFSFSGFFKTHRTIADDGENLATALSLLPANRFSFHKRLSQIIDEENGNHNADEELEHNGNNGVDSDSDADYDNQSSGNSNPSDDESESDEDGYKGPNKSANVPKIVNEKSVIGANELKLINQLTEKIDNGFCLKGSKSDAVSSNEPSSAPRKQHLCEKYGKSIGIIGQGAYGVVKLCYKFIDPDEPDLKDNTYFHDNKLFYAVKELKPRPDEPPKKFSTRLTSEFVIGLSLSGGNKSRRSSARTHPNILNVIDLMQTPNAFYEVMEFCPSGDLYSLITRSSKSDSVLHPLEADCFMKQLLHGIQYMHAHGVAHCDIKPENLLFLPTGVLKICDFGTSSVFQTAWEKKAHFQTGPAGSEPYVAPEEFIPKQQYDPRLVDCWSCGIIYCVMVLGHYLWKIAIKGKDSVYDAFLEDMEKHGQYYVFDEMKHVSPGMNRYRTAALYHIFQVDPNKRITVDSLLKSSWMKRTKCCVTYPPRPV</sequence>
<feature type="chain" id="PRO_0000333582" description="Probable serine/threonine-protein kinase HAL5-like">
    <location>
        <begin position="1"/>
        <end position="772"/>
    </location>
</feature>
<feature type="domain" description="Protein kinase" evidence="1">
    <location>
        <begin position="454"/>
        <end position="758"/>
    </location>
</feature>
<feature type="region of interest" description="Disordered" evidence="3">
    <location>
        <begin position="1"/>
        <end position="102"/>
    </location>
</feature>
<feature type="region of interest" description="Disordered" evidence="3">
    <location>
        <begin position="115"/>
        <end position="165"/>
    </location>
</feature>
<feature type="region of interest" description="Disordered" evidence="3">
    <location>
        <begin position="185"/>
        <end position="241"/>
    </location>
</feature>
<feature type="region of interest" description="Disordered" evidence="3">
    <location>
        <begin position="344"/>
        <end position="396"/>
    </location>
</feature>
<feature type="compositionally biased region" description="Basic and acidic residues" evidence="3">
    <location>
        <begin position="9"/>
        <end position="19"/>
    </location>
</feature>
<feature type="compositionally biased region" description="Low complexity" evidence="3">
    <location>
        <begin position="20"/>
        <end position="33"/>
    </location>
</feature>
<feature type="compositionally biased region" description="Low complexity" evidence="3">
    <location>
        <begin position="41"/>
        <end position="59"/>
    </location>
</feature>
<feature type="compositionally biased region" description="Basic and acidic residues" evidence="3">
    <location>
        <begin position="66"/>
        <end position="86"/>
    </location>
</feature>
<feature type="compositionally biased region" description="Low complexity" evidence="3">
    <location>
        <begin position="146"/>
        <end position="158"/>
    </location>
</feature>
<feature type="compositionally biased region" description="Basic residues" evidence="3">
    <location>
        <begin position="202"/>
        <end position="212"/>
    </location>
</feature>
<feature type="active site" description="Proton acceptor" evidence="1 2">
    <location>
        <position position="609"/>
    </location>
</feature>
<feature type="binding site" evidence="1">
    <location>
        <begin position="460"/>
        <end position="468"/>
    </location>
    <ligand>
        <name>ATP</name>
        <dbReference type="ChEBI" id="CHEBI:30616"/>
    </ligand>
</feature>
<feature type="binding site" evidence="1">
    <location>
        <position position="498"/>
    </location>
    <ligand>
        <name>ATP</name>
        <dbReference type="ChEBI" id="CHEBI:30616"/>
    </ligand>
</feature>
<name>HAL5_KLULA</name>
<gene>
    <name type="ordered locus">KLLA0A06820g</name>
</gene>
<dbReference type="EC" id="2.7.11.1"/>
<dbReference type="EMBL" id="CR382121">
    <property type="protein sequence ID" value="CAH02892.1"/>
    <property type="molecule type" value="Genomic_DNA"/>
</dbReference>
<dbReference type="RefSeq" id="XP_451304.1">
    <property type="nucleotide sequence ID" value="XM_451304.1"/>
</dbReference>
<dbReference type="SMR" id="Q6CXN5"/>
<dbReference type="FunCoup" id="Q6CXN5">
    <property type="interactions" value="223"/>
</dbReference>
<dbReference type="STRING" id="284590.Q6CXN5"/>
<dbReference type="PaxDb" id="284590-Q6CXN5"/>
<dbReference type="KEGG" id="kla:KLLA0_A06820g"/>
<dbReference type="eggNOG" id="KOG0590">
    <property type="taxonomic scope" value="Eukaryota"/>
</dbReference>
<dbReference type="HOGENOM" id="CLU_016904_0_0_1"/>
<dbReference type="InParanoid" id="Q6CXN5"/>
<dbReference type="Proteomes" id="UP000000598">
    <property type="component" value="Chromosome A"/>
</dbReference>
<dbReference type="GO" id="GO:0005829">
    <property type="term" value="C:cytosol"/>
    <property type="evidence" value="ECO:0007669"/>
    <property type="project" value="TreeGrafter"/>
</dbReference>
<dbReference type="GO" id="GO:0005524">
    <property type="term" value="F:ATP binding"/>
    <property type="evidence" value="ECO:0007669"/>
    <property type="project" value="UniProtKB-KW"/>
</dbReference>
<dbReference type="GO" id="GO:0106310">
    <property type="term" value="F:protein serine kinase activity"/>
    <property type="evidence" value="ECO:0007669"/>
    <property type="project" value="RHEA"/>
</dbReference>
<dbReference type="GO" id="GO:0004674">
    <property type="term" value="F:protein serine/threonine kinase activity"/>
    <property type="evidence" value="ECO:0007669"/>
    <property type="project" value="UniProtKB-KW"/>
</dbReference>
<dbReference type="GO" id="GO:0030003">
    <property type="term" value="P:intracellular monoatomic cation homeostasis"/>
    <property type="evidence" value="ECO:0007669"/>
    <property type="project" value="TreeGrafter"/>
</dbReference>
<dbReference type="Gene3D" id="1.10.510.10">
    <property type="entry name" value="Transferase(Phosphotransferase) domain 1"/>
    <property type="match status" value="1"/>
</dbReference>
<dbReference type="InterPro" id="IPR011009">
    <property type="entry name" value="Kinase-like_dom_sf"/>
</dbReference>
<dbReference type="InterPro" id="IPR000719">
    <property type="entry name" value="Prot_kinase_dom"/>
</dbReference>
<dbReference type="InterPro" id="IPR008271">
    <property type="entry name" value="Ser/Thr_kinase_AS"/>
</dbReference>
<dbReference type="PANTHER" id="PTHR24343">
    <property type="entry name" value="SERINE/THREONINE KINASE"/>
    <property type="match status" value="1"/>
</dbReference>
<dbReference type="PANTHER" id="PTHR24343:SF43">
    <property type="entry name" value="SERINE_THREONINE-PROTEIN KINASE HAL5-RELATED"/>
    <property type="match status" value="1"/>
</dbReference>
<dbReference type="Pfam" id="PF00069">
    <property type="entry name" value="Pkinase"/>
    <property type="match status" value="1"/>
</dbReference>
<dbReference type="SMART" id="SM00220">
    <property type="entry name" value="S_TKc"/>
    <property type="match status" value="1"/>
</dbReference>
<dbReference type="SUPFAM" id="SSF56112">
    <property type="entry name" value="Protein kinase-like (PK-like)"/>
    <property type="match status" value="1"/>
</dbReference>
<dbReference type="PROSITE" id="PS50011">
    <property type="entry name" value="PROTEIN_KINASE_DOM"/>
    <property type="match status" value="1"/>
</dbReference>
<dbReference type="PROSITE" id="PS00108">
    <property type="entry name" value="PROTEIN_KINASE_ST"/>
    <property type="match status" value="1"/>
</dbReference>